<dbReference type="EC" id="2.7.8.13" evidence="1"/>
<dbReference type="EMBL" id="AE015451">
    <property type="protein sequence ID" value="AAN66957.1"/>
    <property type="molecule type" value="Genomic_DNA"/>
</dbReference>
<dbReference type="RefSeq" id="NP_743493.1">
    <property type="nucleotide sequence ID" value="NC_002947.4"/>
</dbReference>
<dbReference type="RefSeq" id="WP_003251852.1">
    <property type="nucleotide sequence ID" value="NZ_CP169744.1"/>
</dbReference>
<dbReference type="SMR" id="Q88N79"/>
<dbReference type="STRING" id="160488.PP_1334"/>
<dbReference type="PaxDb" id="160488-PP_1334"/>
<dbReference type="GeneID" id="83682232"/>
<dbReference type="KEGG" id="ppu:PP_1334"/>
<dbReference type="PATRIC" id="fig|160488.4.peg.1413"/>
<dbReference type="eggNOG" id="COG0472">
    <property type="taxonomic scope" value="Bacteria"/>
</dbReference>
<dbReference type="HOGENOM" id="CLU_023982_0_0_6"/>
<dbReference type="OrthoDB" id="9805475at2"/>
<dbReference type="PhylomeDB" id="Q88N79"/>
<dbReference type="BioCyc" id="PPUT160488:G1G01-1421-MONOMER"/>
<dbReference type="UniPathway" id="UPA00219"/>
<dbReference type="Proteomes" id="UP000000556">
    <property type="component" value="Chromosome"/>
</dbReference>
<dbReference type="GO" id="GO:0005886">
    <property type="term" value="C:plasma membrane"/>
    <property type="evidence" value="ECO:0007669"/>
    <property type="project" value="UniProtKB-SubCell"/>
</dbReference>
<dbReference type="GO" id="GO:0046872">
    <property type="term" value="F:metal ion binding"/>
    <property type="evidence" value="ECO:0007669"/>
    <property type="project" value="UniProtKB-KW"/>
</dbReference>
<dbReference type="GO" id="GO:0008963">
    <property type="term" value="F:phospho-N-acetylmuramoyl-pentapeptide-transferase activity"/>
    <property type="evidence" value="ECO:0007669"/>
    <property type="project" value="UniProtKB-UniRule"/>
</dbReference>
<dbReference type="GO" id="GO:0051992">
    <property type="term" value="F:UDP-N-acetylmuramoyl-L-alanyl-D-glutamyl-meso-2,6-diaminopimelyl-D-alanyl-D-alanine:undecaprenyl-phosphate transferase activity"/>
    <property type="evidence" value="ECO:0007669"/>
    <property type="project" value="RHEA"/>
</dbReference>
<dbReference type="GO" id="GO:0051301">
    <property type="term" value="P:cell division"/>
    <property type="evidence" value="ECO:0007669"/>
    <property type="project" value="UniProtKB-KW"/>
</dbReference>
<dbReference type="GO" id="GO:0071555">
    <property type="term" value="P:cell wall organization"/>
    <property type="evidence" value="ECO:0007669"/>
    <property type="project" value="UniProtKB-KW"/>
</dbReference>
<dbReference type="GO" id="GO:0009252">
    <property type="term" value="P:peptidoglycan biosynthetic process"/>
    <property type="evidence" value="ECO:0007669"/>
    <property type="project" value="UniProtKB-UniRule"/>
</dbReference>
<dbReference type="GO" id="GO:0008360">
    <property type="term" value="P:regulation of cell shape"/>
    <property type="evidence" value="ECO:0007669"/>
    <property type="project" value="UniProtKB-KW"/>
</dbReference>
<dbReference type="CDD" id="cd06852">
    <property type="entry name" value="GT_MraY"/>
    <property type="match status" value="1"/>
</dbReference>
<dbReference type="HAMAP" id="MF_00038">
    <property type="entry name" value="MraY"/>
    <property type="match status" value="1"/>
</dbReference>
<dbReference type="InterPro" id="IPR000715">
    <property type="entry name" value="Glycosyl_transferase_4"/>
</dbReference>
<dbReference type="InterPro" id="IPR003524">
    <property type="entry name" value="PNAcMuramoyl-5peptid_Trfase"/>
</dbReference>
<dbReference type="InterPro" id="IPR018480">
    <property type="entry name" value="PNAcMuramoyl-5peptid_Trfase_CS"/>
</dbReference>
<dbReference type="NCBIfam" id="TIGR00445">
    <property type="entry name" value="mraY"/>
    <property type="match status" value="1"/>
</dbReference>
<dbReference type="PANTHER" id="PTHR22926">
    <property type="entry name" value="PHOSPHO-N-ACETYLMURAMOYL-PENTAPEPTIDE-TRANSFERASE"/>
    <property type="match status" value="1"/>
</dbReference>
<dbReference type="PANTHER" id="PTHR22926:SF5">
    <property type="entry name" value="PHOSPHO-N-ACETYLMURAMOYL-PENTAPEPTIDE-TRANSFERASE HOMOLOG"/>
    <property type="match status" value="1"/>
</dbReference>
<dbReference type="Pfam" id="PF00953">
    <property type="entry name" value="Glycos_transf_4"/>
    <property type="match status" value="1"/>
</dbReference>
<dbReference type="Pfam" id="PF10555">
    <property type="entry name" value="MraY_sig1"/>
    <property type="match status" value="1"/>
</dbReference>
<dbReference type="PROSITE" id="PS01347">
    <property type="entry name" value="MRAY_1"/>
    <property type="match status" value="1"/>
</dbReference>
<dbReference type="PROSITE" id="PS01348">
    <property type="entry name" value="MRAY_2"/>
    <property type="match status" value="1"/>
</dbReference>
<keyword id="KW-0131">Cell cycle</keyword>
<keyword id="KW-0132">Cell division</keyword>
<keyword id="KW-0997">Cell inner membrane</keyword>
<keyword id="KW-1003">Cell membrane</keyword>
<keyword id="KW-0133">Cell shape</keyword>
<keyword id="KW-0961">Cell wall biogenesis/degradation</keyword>
<keyword id="KW-0460">Magnesium</keyword>
<keyword id="KW-0472">Membrane</keyword>
<keyword id="KW-0479">Metal-binding</keyword>
<keyword id="KW-0573">Peptidoglycan synthesis</keyword>
<keyword id="KW-1185">Reference proteome</keyword>
<keyword id="KW-0808">Transferase</keyword>
<keyword id="KW-0812">Transmembrane</keyword>
<keyword id="KW-1133">Transmembrane helix</keyword>
<name>MRAY_PSEPK</name>
<reference key="1">
    <citation type="journal article" date="2002" name="Environ. Microbiol.">
        <title>Complete genome sequence and comparative analysis of the metabolically versatile Pseudomonas putida KT2440.</title>
        <authorList>
            <person name="Nelson K.E."/>
            <person name="Weinel C."/>
            <person name="Paulsen I.T."/>
            <person name="Dodson R.J."/>
            <person name="Hilbert H."/>
            <person name="Martins dos Santos V.A.P."/>
            <person name="Fouts D.E."/>
            <person name="Gill S.R."/>
            <person name="Pop M."/>
            <person name="Holmes M."/>
            <person name="Brinkac L.M."/>
            <person name="Beanan M.J."/>
            <person name="DeBoy R.T."/>
            <person name="Daugherty S.C."/>
            <person name="Kolonay J.F."/>
            <person name="Madupu R."/>
            <person name="Nelson W.C."/>
            <person name="White O."/>
            <person name="Peterson J.D."/>
            <person name="Khouri H.M."/>
            <person name="Hance I."/>
            <person name="Chris Lee P."/>
            <person name="Holtzapple E.K."/>
            <person name="Scanlan D."/>
            <person name="Tran K."/>
            <person name="Moazzez A."/>
            <person name="Utterback T.R."/>
            <person name="Rizzo M."/>
            <person name="Lee K."/>
            <person name="Kosack D."/>
            <person name="Moestl D."/>
            <person name="Wedler H."/>
            <person name="Lauber J."/>
            <person name="Stjepandic D."/>
            <person name="Hoheisel J."/>
            <person name="Straetz M."/>
            <person name="Heim S."/>
            <person name="Kiewitz C."/>
            <person name="Eisen J.A."/>
            <person name="Timmis K.N."/>
            <person name="Duesterhoeft A."/>
            <person name="Tuemmler B."/>
            <person name="Fraser C.M."/>
        </authorList>
    </citation>
    <scope>NUCLEOTIDE SEQUENCE [LARGE SCALE GENOMIC DNA]</scope>
    <source>
        <strain>ATCC 47054 / DSM 6125 / CFBP 8728 / NCIMB 11950 / KT2440</strain>
    </source>
</reference>
<organism>
    <name type="scientific">Pseudomonas putida (strain ATCC 47054 / DSM 6125 / CFBP 8728 / NCIMB 11950 / KT2440)</name>
    <dbReference type="NCBI Taxonomy" id="160488"/>
    <lineage>
        <taxon>Bacteria</taxon>
        <taxon>Pseudomonadati</taxon>
        <taxon>Pseudomonadota</taxon>
        <taxon>Gammaproteobacteria</taxon>
        <taxon>Pseudomonadales</taxon>
        <taxon>Pseudomonadaceae</taxon>
        <taxon>Pseudomonas</taxon>
    </lineage>
</organism>
<proteinExistence type="inferred from homology"/>
<comment type="function">
    <text evidence="1">Catalyzes the initial step of the lipid cycle reactions in the biosynthesis of the cell wall peptidoglycan: transfers peptidoglycan precursor phospho-MurNAc-pentapeptide from UDP-MurNAc-pentapeptide onto the lipid carrier undecaprenyl phosphate, yielding undecaprenyl-pyrophosphoryl-MurNAc-pentapeptide, known as lipid I.</text>
</comment>
<comment type="catalytic activity">
    <reaction evidence="1">
        <text>UDP-N-acetyl-alpha-D-muramoyl-L-alanyl-gamma-D-glutamyl-meso-2,6-diaminopimeloyl-D-alanyl-D-alanine + di-trans,octa-cis-undecaprenyl phosphate = di-trans,octa-cis-undecaprenyl diphospho-N-acetyl-alpha-D-muramoyl-L-alanyl-D-glutamyl-meso-2,6-diaminopimeloyl-D-alanyl-D-alanine + UMP</text>
        <dbReference type="Rhea" id="RHEA:28386"/>
        <dbReference type="ChEBI" id="CHEBI:57865"/>
        <dbReference type="ChEBI" id="CHEBI:60392"/>
        <dbReference type="ChEBI" id="CHEBI:61386"/>
        <dbReference type="ChEBI" id="CHEBI:61387"/>
        <dbReference type="EC" id="2.7.8.13"/>
    </reaction>
</comment>
<comment type="cofactor">
    <cofactor evidence="1">
        <name>Mg(2+)</name>
        <dbReference type="ChEBI" id="CHEBI:18420"/>
    </cofactor>
</comment>
<comment type="pathway">
    <text evidence="1">Cell wall biogenesis; peptidoglycan biosynthesis.</text>
</comment>
<comment type="subcellular location">
    <subcellularLocation>
        <location evidence="1">Cell inner membrane</location>
        <topology evidence="1">Multi-pass membrane protein</topology>
    </subcellularLocation>
</comment>
<comment type="similarity">
    <text evidence="1">Belongs to the glycosyltransferase 4 family. MraY subfamily.</text>
</comment>
<gene>
    <name evidence="1" type="primary">mraY</name>
    <name type="ordered locus">PP_1334</name>
</gene>
<feature type="chain" id="PRO_0000108872" description="Phospho-N-acetylmuramoyl-pentapeptide-transferase">
    <location>
        <begin position="1"/>
        <end position="360"/>
    </location>
</feature>
<feature type="transmembrane region" description="Helical" evidence="1">
    <location>
        <begin position="25"/>
        <end position="45"/>
    </location>
</feature>
<feature type="transmembrane region" description="Helical" evidence="1">
    <location>
        <begin position="73"/>
        <end position="93"/>
    </location>
</feature>
<feature type="transmembrane region" description="Helical" evidence="1">
    <location>
        <begin position="97"/>
        <end position="117"/>
    </location>
</feature>
<feature type="transmembrane region" description="Helical" evidence="1">
    <location>
        <begin position="134"/>
        <end position="154"/>
    </location>
</feature>
<feature type="transmembrane region" description="Helical" evidence="1">
    <location>
        <begin position="168"/>
        <end position="188"/>
    </location>
</feature>
<feature type="transmembrane region" description="Helical" evidence="1">
    <location>
        <begin position="199"/>
        <end position="219"/>
    </location>
</feature>
<feature type="transmembrane region" description="Helical" evidence="1">
    <location>
        <begin position="236"/>
        <end position="256"/>
    </location>
</feature>
<feature type="transmembrane region" description="Helical" evidence="1">
    <location>
        <begin position="263"/>
        <end position="283"/>
    </location>
</feature>
<feature type="transmembrane region" description="Helical" evidence="1">
    <location>
        <begin position="288"/>
        <end position="308"/>
    </location>
</feature>
<feature type="transmembrane region" description="Helical" evidence="1">
    <location>
        <begin position="338"/>
        <end position="358"/>
    </location>
</feature>
<accession>Q88N79</accession>
<evidence type="ECO:0000255" key="1">
    <source>
        <dbReference type="HAMAP-Rule" id="MF_00038"/>
    </source>
</evidence>
<sequence length="360" mass="39307">MLLLLAEYLQQFHKGFAVFQYLSLRGILGVLTALSLALWLGPWMIRTLQIRQIGQAVRNDGPQSHLSKSGTPTMGGALILSAIAVSTLLWADLSNRYVWVVLIVTLAFGAIGWVDDYRKVIEKNSRGLPSRWKYFWQSVFGLAAAVFLYKTAPTSVETTLILPFIKDVTIPLGVGFVVLTYFVIVGSSNAVNLTDGLDGLAIMPTVMVGGALGIFCYLSGNVKFAEYLLIPYVPGSGELIVFCGALIGAGLGFLWFNTYPAQVFMGDVGALALGAALGTIAVIVRQEIVLFIMGGIFVVETLSVVIQVASFKLTGKRVFRMAPIHHHFELKGWPEPRVIVRFWIITVILVLIGLATLKLR</sequence>
<protein>
    <recommendedName>
        <fullName evidence="1">Phospho-N-acetylmuramoyl-pentapeptide-transferase</fullName>
        <ecNumber evidence="1">2.7.8.13</ecNumber>
    </recommendedName>
    <alternativeName>
        <fullName evidence="1">UDP-MurNAc-pentapeptide phosphotransferase</fullName>
    </alternativeName>
</protein>